<organism>
    <name type="scientific">Bromus secalinus</name>
    <name type="common">Rye brome</name>
    <dbReference type="NCBI Taxonomy" id="4502"/>
    <lineage>
        <taxon>Eukaryota</taxon>
        <taxon>Viridiplantae</taxon>
        <taxon>Streptophyta</taxon>
        <taxon>Embryophyta</taxon>
        <taxon>Tracheophyta</taxon>
        <taxon>Spermatophyta</taxon>
        <taxon>Magnoliopsida</taxon>
        <taxon>Liliopsida</taxon>
        <taxon>Poales</taxon>
        <taxon>Poaceae</taxon>
        <taxon>BOP clade</taxon>
        <taxon>Pooideae</taxon>
        <taxon>Triticodae</taxon>
        <taxon>Bromeae</taxon>
        <taxon>Bromus</taxon>
    </lineage>
</organism>
<reference key="1">
    <citation type="journal article" date="1992" name="Plant Mol. Biol.">
        <title>Cloning and expression of an embryo-specific mRNA up-regulated in hydrated dormant seeds.</title>
        <authorList>
            <person name="Goldmark P.J."/>
            <person name="Curry J."/>
            <person name="Morris C.F."/>
            <person name="Walker-Simmons M.K."/>
        </authorList>
    </citation>
    <scope>NUCLEOTIDE SEQUENCE [MRNA]</scope>
    <source>
        <tissue>Embryo</tissue>
    </source>
</reference>
<dbReference type="EC" id="1.11.1.24" evidence="3"/>
<dbReference type="EMBL" id="X63202">
    <property type="protein sequence ID" value="CAA44884.1"/>
    <property type="molecule type" value="mRNA"/>
</dbReference>
<dbReference type="PIR" id="S22499">
    <property type="entry name" value="S22499"/>
</dbReference>
<dbReference type="SMR" id="P52571"/>
<dbReference type="PeroxiBase" id="4976">
    <property type="entry name" value="Bse1CysPrx"/>
</dbReference>
<dbReference type="GO" id="GO:0005829">
    <property type="term" value="C:cytosol"/>
    <property type="evidence" value="ECO:0007669"/>
    <property type="project" value="TreeGrafter"/>
</dbReference>
<dbReference type="GO" id="GO:0005739">
    <property type="term" value="C:mitochondrion"/>
    <property type="evidence" value="ECO:0007669"/>
    <property type="project" value="TreeGrafter"/>
</dbReference>
<dbReference type="GO" id="GO:0005634">
    <property type="term" value="C:nucleus"/>
    <property type="evidence" value="ECO:0007669"/>
    <property type="project" value="UniProtKB-SubCell"/>
</dbReference>
<dbReference type="GO" id="GO:0140824">
    <property type="term" value="F:thioredoxin-dependent peroxiredoxin activity"/>
    <property type="evidence" value="ECO:0007669"/>
    <property type="project" value="UniProtKB-EC"/>
</dbReference>
<dbReference type="GO" id="GO:0045454">
    <property type="term" value="P:cell redox homeostasis"/>
    <property type="evidence" value="ECO:0007669"/>
    <property type="project" value="TreeGrafter"/>
</dbReference>
<dbReference type="CDD" id="cd03016">
    <property type="entry name" value="PRX_1cys"/>
    <property type="match status" value="1"/>
</dbReference>
<dbReference type="FunFam" id="3.30.1020.10:FF:000001">
    <property type="entry name" value="1-Cys peroxiredoxin"/>
    <property type="match status" value="1"/>
</dbReference>
<dbReference type="FunFam" id="3.40.30.10:FF:000011">
    <property type="entry name" value="Peroxiredoxin PRX1"/>
    <property type="match status" value="1"/>
</dbReference>
<dbReference type="Gene3D" id="3.30.1020.10">
    <property type="entry name" value="Antioxidant, Horf6, Chain A, domain2"/>
    <property type="match status" value="1"/>
</dbReference>
<dbReference type="Gene3D" id="3.40.30.10">
    <property type="entry name" value="Glutaredoxin"/>
    <property type="match status" value="1"/>
</dbReference>
<dbReference type="InterPro" id="IPR000866">
    <property type="entry name" value="AhpC/TSA"/>
</dbReference>
<dbReference type="InterPro" id="IPR024706">
    <property type="entry name" value="Peroxiredoxin_AhpC-typ"/>
</dbReference>
<dbReference type="InterPro" id="IPR019479">
    <property type="entry name" value="Peroxiredoxin_C"/>
</dbReference>
<dbReference type="InterPro" id="IPR045020">
    <property type="entry name" value="PRX_1cys"/>
</dbReference>
<dbReference type="InterPro" id="IPR036249">
    <property type="entry name" value="Thioredoxin-like_sf"/>
</dbReference>
<dbReference type="InterPro" id="IPR013766">
    <property type="entry name" value="Thioredoxin_domain"/>
</dbReference>
<dbReference type="PANTHER" id="PTHR43503">
    <property type="entry name" value="MCG48959-RELATED"/>
    <property type="match status" value="1"/>
</dbReference>
<dbReference type="PANTHER" id="PTHR43503:SF4">
    <property type="entry name" value="PEROXIREDOXIN-6"/>
    <property type="match status" value="1"/>
</dbReference>
<dbReference type="Pfam" id="PF10417">
    <property type="entry name" value="1-cysPrx_C"/>
    <property type="match status" value="1"/>
</dbReference>
<dbReference type="Pfam" id="PF00578">
    <property type="entry name" value="AhpC-TSA"/>
    <property type="match status" value="1"/>
</dbReference>
<dbReference type="PIRSF" id="PIRSF000239">
    <property type="entry name" value="AHPC"/>
    <property type="match status" value="1"/>
</dbReference>
<dbReference type="SUPFAM" id="SSF52833">
    <property type="entry name" value="Thioredoxin-like"/>
    <property type="match status" value="1"/>
</dbReference>
<dbReference type="PROSITE" id="PS51352">
    <property type="entry name" value="THIOREDOXIN_2"/>
    <property type="match status" value="1"/>
</dbReference>
<comment type="function">
    <text evidence="1 3">Thiol-specific peroxidase that catalyzes the reduction of hydrogen peroxide and organic hydroperoxides to water and alcohols, respectively (By similarity). Seems to contribute to the inhibition of germination during stress (By similarity).</text>
</comment>
<comment type="catalytic activity">
    <reaction evidence="3">
        <text>a hydroperoxide + [thioredoxin]-dithiol = an alcohol + [thioredoxin]-disulfide + H2O</text>
        <dbReference type="Rhea" id="RHEA:62620"/>
        <dbReference type="Rhea" id="RHEA-COMP:10698"/>
        <dbReference type="Rhea" id="RHEA-COMP:10700"/>
        <dbReference type="ChEBI" id="CHEBI:15377"/>
        <dbReference type="ChEBI" id="CHEBI:29950"/>
        <dbReference type="ChEBI" id="CHEBI:30879"/>
        <dbReference type="ChEBI" id="CHEBI:35924"/>
        <dbReference type="ChEBI" id="CHEBI:50058"/>
        <dbReference type="EC" id="1.11.1.24"/>
    </reaction>
</comment>
<comment type="subcellular location">
    <subcellularLocation>
        <location evidence="1">Nucleus</location>
    </subcellularLocation>
    <subcellularLocation>
        <location evidence="1">Cytoplasm</location>
    </subcellularLocation>
</comment>
<comment type="tissue specificity">
    <text>Embryos.</text>
</comment>
<comment type="miscellaneous">
    <text evidence="2">The active site is a conserved redox-active cysteine residue, the peroxidatic cysteine (C(P)), which makes the nucleophilic attack on the peroxide substrate. The peroxide oxidizes the C(P)-SH to cysteine sulfenic acid (C(P)-SOH), which then reacts with another cysteine residue, the resolving cysteine (C(R)), to form a disulfide bridge. The disulfide is subsequently reduced by an appropriate electron donor to complete the catalytic cycle. In this 1-Cys peroxiredoxin, no C(R) is present and C(P) instead forms a disulfide with a cysteine from another protein or with a small thiol molecule.</text>
</comment>
<comment type="similarity">
    <text evidence="6">Belongs to the peroxiredoxin family. Prx6 subfamily.</text>
</comment>
<keyword id="KW-0049">Antioxidant</keyword>
<keyword id="KW-0963">Cytoplasm</keyword>
<keyword id="KW-0539">Nucleus</keyword>
<keyword id="KW-0560">Oxidoreductase</keyword>
<keyword id="KW-0575">Peroxidase</keyword>
<keyword id="KW-0676">Redox-active center</keyword>
<sequence length="202" mass="22380">STHGKIRIHDYVANGYVILFSHPGDFTPVCTTELAAMANYAKEFEKRGVKLLGISCDDVQSHKEWTKDIEAYKPGSKVTYPIMADPDRSAIKQLNMVDPDEKDAEGQLPSRTLHIVGPDKKVKLSFLYPSCTGRNMDEVVRAVDSLLTAAKHKVATPANWKPGECVVIAPGVSDEEAKKLFPQGFETKDLPSKKGYLRFTKV</sequence>
<accession>P52571</accession>
<protein>
    <recommendedName>
        <fullName>Probable 1-Cys peroxiredoxin</fullName>
        <ecNumber evidence="3">1.11.1.24</ecNumber>
    </recommendedName>
    <alternativeName>
        <fullName>Dormancy-associated protein PBS128</fullName>
    </alternativeName>
    <alternativeName>
        <fullName>Rehydrin homolog</fullName>
    </alternativeName>
    <alternativeName>
        <fullName>Thioredoxin peroxidase</fullName>
    </alternativeName>
    <alternativeName>
        <fullName evidence="6">Thioredoxin-dependent peroxiredoxin</fullName>
    </alternativeName>
</protein>
<feature type="chain" id="PRO_0000135108" description="Probable 1-Cys peroxiredoxin">
    <location>
        <begin position="1" status="less than"/>
        <end position="202"/>
    </location>
</feature>
<feature type="domain" description="Thioredoxin" evidence="5">
    <location>
        <begin position="1" status="less than"/>
        <end position="148"/>
    </location>
</feature>
<feature type="short sequence motif" description="Bipartite nuclear localization signal" evidence="4">
    <location>
        <begin position="178"/>
        <end position="201"/>
    </location>
</feature>
<feature type="active site" description="Cysteine sulfenic acid (-SOH) intermediate" evidence="3">
    <location>
        <position position="30"/>
    </location>
</feature>
<feature type="non-terminal residue">
    <location>
        <position position="1"/>
    </location>
</feature>
<name>REHY_BROSE</name>
<evidence type="ECO:0000250" key="1">
    <source>
        <dbReference type="UniProtKB" id="O04005"/>
    </source>
</evidence>
<evidence type="ECO:0000250" key="2">
    <source>
        <dbReference type="UniProtKB" id="O35244"/>
    </source>
</evidence>
<evidence type="ECO:0000250" key="3">
    <source>
        <dbReference type="UniProtKB" id="P30041"/>
    </source>
</evidence>
<evidence type="ECO:0000255" key="4"/>
<evidence type="ECO:0000255" key="5">
    <source>
        <dbReference type="PROSITE-ProRule" id="PRU00691"/>
    </source>
</evidence>
<evidence type="ECO:0000305" key="6"/>
<proteinExistence type="evidence at transcript level"/>